<keyword id="KW-0028">Amino-acid biosynthesis</keyword>
<keyword id="KW-0057">Aromatic amino acid biosynthesis</keyword>
<keyword id="KW-0413">Isomerase</keyword>
<keyword id="KW-1185">Reference proteome</keyword>
<keyword id="KW-0822">Tryptophan biosynthesis</keyword>
<feature type="chain" id="PRO_1000018597" description="N-(5'-phosphoribosyl)anthranilate isomerase">
    <location>
        <begin position="1"/>
        <end position="227"/>
    </location>
</feature>
<dbReference type="EC" id="5.3.1.24" evidence="1"/>
<dbReference type="EMBL" id="CU207211">
    <property type="protein sequence ID" value="CAL61398.1"/>
    <property type="molecule type" value="Genomic_DNA"/>
</dbReference>
<dbReference type="SMR" id="A4G4G1"/>
<dbReference type="STRING" id="204773.HEAR1222"/>
<dbReference type="KEGG" id="har:HEAR1222"/>
<dbReference type="eggNOG" id="COG0135">
    <property type="taxonomic scope" value="Bacteria"/>
</dbReference>
<dbReference type="HOGENOM" id="CLU_076364_2_0_4"/>
<dbReference type="OrthoDB" id="9796196at2"/>
<dbReference type="UniPathway" id="UPA00035">
    <property type="reaction ID" value="UER00042"/>
</dbReference>
<dbReference type="Proteomes" id="UP000006697">
    <property type="component" value="Chromosome"/>
</dbReference>
<dbReference type="GO" id="GO:0004640">
    <property type="term" value="F:phosphoribosylanthranilate isomerase activity"/>
    <property type="evidence" value="ECO:0007669"/>
    <property type="project" value="UniProtKB-UniRule"/>
</dbReference>
<dbReference type="GO" id="GO:0000162">
    <property type="term" value="P:L-tryptophan biosynthetic process"/>
    <property type="evidence" value="ECO:0007669"/>
    <property type="project" value="UniProtKB-UniRule"/>
</dbReference>
<dbReference type="CDD" id="cd00405">
    <property type="entry name" value="PRAI"/>
    <property type="match status" value="1"/>
</dbReference>
<dbReference type="FunFam" id="3.20.20.70:FF:000075">
    <property type="entry name" value="Tryptophan biosynthesis protein TRP1"/>
    <property type="match status" value="1"/>
</dbReference>
<dbReference type="Gene3D" id="3.20.20.70">
    <property type="entry name" value="Aldolase class I"/>
    <property type="match status" value="1"/>
</dbReference>
<dbReference type="HAMAP" id="MF_00135">
    <property type="entry name" value="PRAI"/>
    <property type="match status" value="1"/>
</dbReference>
<dbReference type="InterPro" id="IPR013785">
    <property type="entry name" value="Aldolase_TIM"/>
</dbReference>
<dbReference type="InterPro" id="IPR001240">
    <property type="entry name" value="PRAI_dom"/>
</dbReference>
<dbReference type="InterPro" id="IPR011060">
    <property type="entry name" value="RibuloseP-bd_barrel"/>
</dbReference>
<dbReference type="InterPro" id="IPR044643">
    <property type="entry name" value="TrpF_fam"/>
</dbReference>
<dbReference type="NCBIfam" id="NF002298">
    <property type="entry name" value="PRK01222.1-4"/>
    <property type="match status" value="1"/>
</dbReference>
<dbReference type="NCBIfam" id="NF002299">
    <property type="entry name" value="PRK01222.1-6"/>
    <property type="match status" value="1"/>
</dbReference>
<dbReference type="PANTHER" id="PTHR42894">
    <property type="entry name" value="N-(5'-PHOSPHORIBOSYL)ANTHRANILATE ISOMERASE"/>
    <property type="match status" value="1"/>
</dbReference>
<dbReference type="PANTHER" id="PTHR42894:SF1">
    <property type="entry name" value="N-(5'-PHOSPHORIBOSYL)ANTHRANILATE ISOMERASE"/>
    <property type="match status" value="1"/>
</dbReference>
<dbReference type="Pfam" id="PF00697">
    <property type="entry name" value="PRAI"/>
    <property type="match status" value="1"/>
</dbReference>
<dbReference type="SUPFAM" id="SSF51366">
    <property type="entry name" value="Ribulose-phoshate binding barrel"/>
    <property type="match status" value="1"/>
</dbReference>
<name>TRPF_HERAR</name>
<evidence type="ECO:0000255" key="1">
    <source>
        <dbReference type="HAMAP-Rule" id="MF_00135"/>
    </source>
</evidence>
<gene>
    <name evidence="1" type="primary">trpF</name>
    <name type="ordered locus">HEAR1222</name>
</gene>
<reference key="1">
    <citation type="journal article" date="2007" name="PLoS Genet.">
        <title>A tale of two oxidation states: bacterial colonization of arsenic-rich environments.</title>
        <authorList>
            <person name="Muller D."/>
            <person name="Medigue C."/>
            <person name="Koechler S."/>
            <person name="Barbe V."/>
            <person name="Barakat M."/>
            <person name="Talla E."/>
            <person name="Bonnefoy V."/>
            <person name="Krin E."/>
            <person name="Arsene-Ploetze F."/>
            <person name="Carapito C."/>
            <person name="Chandler M."/>
            <person name="Cournoyer B."/>
            <person name="Cruveiller S."/>
            <person name="Dossat C."/>
            <person name="Duval S."/>
            <person name="Heymann M."/>
            <person name="Leize E."/>
            <person name="Lieutaud A."/>
            <person name="Lievremont D."/>
            <person name="Makita Y."/>
            <person name="Mangenot S."/>
            <person name="Nitschke W."/>
            <person name="Ortet P."/>
            <person name="Perdrial N."/>
            <person name="Schoepp B."/>
            <person name="Siguier P."/>
            <person name="Simeonova D.D."/>
            <person name="Rouy Z."/>
            <person name="Segurens B."/>
            <person name="Turlin E."/>
            <person name="Vallenet D."/>
            <person name="van Dorsselaer A."/>
            <person name="Weiss S."/>
            <person name="Weissenbach J."/>
            <person name="Lett M.-C."/>
            <person name="Danchin A."/>
            <person name="Bertin P.N."/>
        </authorList>
    </citation>
    <scope>NUCLEOTIDE SEQUENCE [LARGE SCALE GENOMIC DNA]</scope>
    <source>
        <strain>ULPAs1</strain>
    </source>
</reference>
<sequence>MDTMIHRTRIKICGLTRAEDMQDALAAGADAIGFVFYARSPRYIAPDAAAQLIAQLPPFVSAVGLFVNAGVEEVQAVVAQTSIALLQFHGDETVTECAAIAAAVNRPFIRAIRVKPDTSAADLLKYESDYRAASRLFAGLLLDTYVDSYGGSGKVFDWSLIPANIAPRVVLSGGLSAQNATDAVQRIRPYAVDVSSGVERDKGIKDVAKINAFIAAVRVADAALQSK</sequence>
<proteinExistence type="inferred from homology"/>
<accession>A4G4G1</accession>
<comment type="catalytic activity">
    <reaction evidence="1">
        <text>N-(5-phospho-beta-D-ribosyl)anthranilate = 1-(2-carboxyphenylamino)-1-deoxy-D-ribulose 5-phosphate</text>
        <dbReference type="Rhea" id="RHEA:21540"/>
        <dbReference type="ChEBI" id="CHEBI:18277"/>
        <dbReference type="ChEBI" id="CHEBI:58613"/>
        <dbReference type="EC" id="5.3.1.24"/>
    </reaction>
</comment>
<comment type="pathway">
    <text evidence="1">Amino-acid biosynthesis; L-tryptophan biosynthesis; L-tryptophan from chorismate: step 3/5.</text>
</comment>
<comment type="similarity">
    <text evidence="1">Belongs to the TrpF family.</text>
</comment>
<protein>
    <recommendedName>
        <fullName evidence="1">N-(5'-phosphoribosyl)anthranilate isomerase</fullName>
        <shortName evidence="1">PRAI</shortName>
        <ecNumber evidence="1">5.3.1.24</ecNumber>
    </recommendedName>
</protein>
<organism>
    <name type="scientific">Herminiimonas arsenicoxydans</name>
    <dbReference type="NCBI Taxonomy" id="204773"/>
    <lineage>
        <taxon>Bacteria</taxon>
        <taxon>Pseudomonadati</taxon>
        <taxon>Pseudomonadota</taxon>
        <taxon>Betaproteobacteria</taxon>
        <taxon>Burkholderiales</taxon>
        <taxon>Oxalobacteraceae</taxon>
        <taxon>Herminiimonas</taxon>
    </lineage>
</organism>